<protein>
    <recommendedName>
        <fullName evidence="1">Glycogen synthase</fullName>
        <ecNumber evidence="1">2.4.1.21</ecNumber>
    </recommendedName>
    <alternativeName>
        <fullName evidence="1">Starch [bacterial glycogen] synthase</fullName>
    </alternativeName>
</protein>
<evidence type="ECO:0000255" key="1">
    <source>
        <dbReference type="HAMAP-Rule" id="MF_00484"/>
    </source>
</evidence>
<accession>B8DL94</accession>
<keyword id="KW-0320">Glycogen biosynthesis</keyword>
<keyword id="KW-0328">Glycosyltransferase</keyword>
<keyword id="KW-0808">Transferase</keyword>
<feature type="chain" id="PRO_1000126064" description="Glycogen synthase">
    <location>
        <begin position="1"/>
        <end position="488"/>
    </location>
</feature>
<feature type="binding site" evidence="1">
    <location>
        <position position="17"/>
    </location>
    <ligand>
        <name>ADP-alpha-D-glucose</name>
        <dbReference type="ChEBI" id="CHEBI:57498"/>
    </ligand>
</feature>
<sequence>MRREVVFVTSEMYPFSKSGGLGDVLGAQPLALHRMGVPTSVITPFYGRLRTADYGIHLTVSDCHVGYPWDPITCDIYEADYHGMKVYFVHRGEYFDRRYYYNDHKGDYFDNCERFIFFCRAAMALLRRLGTPPAVLHANDWQSGLVPAYLHFWRQTDPFWADTRSVMTIHNLAFQGRFASRLFTGCGLPPQAWTMSGVEFWGDFNLLKAGIAYADMVTTVSPSYAREILGPAYGCGLEGILQVRQHALHGILNGADYGIWNPAQDKFLPCRYGPDDPQGFAGKQRCKAALLDELGLAPELAHRPVLGFIGRLRGQKGIDLLLDIVPRLMERNVGVIILGEGNLAHEARALDLMETYRGRLCAIVGYTEDLAHRIQAGSDIFLMPSRYEPCGLTQMYALRYGTPPVATAVGGLRDTIVPWPSPEATGFTFGRSDPQLFLEAILDAVHYWEHDTEGWRAMMTRAMHQDFSWERAGRSYLNLYRQLGFDFS</sequence>
<reference key="1">
    <citation type="submission" date="2008-10" db="EMBL/GenBank/DDBJ databases">
        <title>Complete sequence of Desulfovibrio vulgaris str. 'Miyazaki F'.</title>
        <authorList>
            <person name="Lucas S."/>
            <person name="Copeland A."/>
            <person name="Lapidus A."/>
            <person name="Glavina del Rio T."/>
            <person name="Dalin E."/>
            <person name="Tice H."/>
            <person name="Bruce D."/>
            <person name="Goodwin L."/>
            <person name="Pitluck S."/>
            <person name="Sims D."/>
            <person name="Brettin T."/>
            <person name="Detter J.C."/>
            <person name="Han C."/>
            <person name="Larimer F."/>
            <person name="Land M."/>
            <person name="Hauser L."/>
            <person name="Kyrpides N."/>
            <person name="Mikhailova N."/>
            <person name="Hazen T.C."/>
            <person name="Richardson P."/>
        </authorList>
    </citation>
    <scope>NUCLEOTIDE SEQUENCE [LARGE SCALE GENOMIC DNA]</scope>
    <source>
        <strain>DSM 19637 / Miyazaki F</strain>
    </source>
</reference>
<dbReference type="EC" id="2.4.1.21" evidence="1"/>
<dbReference type="EMBL" id="CP001197">
    <property type="protein sequence ID" value="ACL07797.1"/>
    <property type="molecule type" value="Genomic_DNA"/>
</dbReference>
<dbReference type="SMR" id="B8DL94"/>
<dbReference type="STRING" id="883.DvMF_0841"/>
<dbReference type="CAZy" id="GT5">
    <property type="family name" value="Glycosyltransferase Family 5"/>
</dbReference>
<dbReference type="KEGG" id="dvm:DvMF_0841"/>
<dbReference type="eggNOG" id="COG0297">
    <property type="taxonomic scope" value="Bacteria"/>
</dbReference>
<dbReference type="HOGENOM" id="CLU_009583_18_5_7"/>
<dbReference type="OrthoDB" id="9808590at2"/>
<dbReference type="UniPathway" id="UPA00164"/>
<dbReference type="GO" id="GO:0009011">
    <property type="term" value="F:alpha-1,4-glucan glucosyltransferase (ADP-glucose donor) activity"/>
    <property type="evidence" value="ECO:0007669"/>
    <property type="project" value="UniProtKB-UniRule"/>
</dbReference>
<dbReference type="GO" id="GO:0004373">
    <property type="term" value="F:alpha-1,4-glucan glucosyltransferase (UDP-glucose donor) activity"/>
    <property type="evidence" value="ECO:0007669"/>
    <property type="project" value="InterPro"/>
</dbReference>
<dbReference type="GO" id="GO:0005978">
    <property type="term" value="P:glycogen biosynthetic process"/>
    <property type="evidence" value="ECO:0007669"/>
    <property type="project" value="UniProtKB-UniRule"/>
</dbReference>
<dbReference type="CDD" id="cd03791">
    <property type="entry name" value="GT5_Glycogen_synthase_DULL1-like"/>
    <property type="match status" value="1"/>
</dbReference>
<dbReference type="Gene3D" id="3.40.50.2000">
    <property type="entry name" value="Glycogen Phosphorylase B"/>
    <property type="match status" value="2"/>
</dbReference>
<dbReference type="HAMAP" id="MF_00484">
    <property type="entry name" value="Glycogen_synth"/>
    <property type="match status" value="1"/>
</dbReference>
<dbReference type="InterPro" id="IPR011835">
    <property type="entry name" value="GS/SS"/>
</dbReference>
<dbReference type="InterPro" id="IPR013534">
    <property type="entry name" value="Starch_synth_cat_dom"/>
</dbReference>
<dbReference type="NCBIfam" id="TIGR02095">
    <property type="entry name" value="glgA"/>
    <property type="match status" value="1"/>
</dbReference>
<dbReference type="NCBIfam" id="NF001899">
    <property type="entry name" value="PRK00654.1-2"/>
    <property type="match status" value="1"/>
</dbReference>
<dbReference type="PANTHER" id="PTHR45825:SF11">
    <property type="entry name" value="ALPHA AMYLASE DOMAIN-CONTAINING PROTEIN"/>
    <property type="match status" value="1"/>
</dbReference>
<dbReference type="PANTHER" id="PTHR45825">
    <property type="entry name" value="GRANULE-BOUND STARCH SYNTHASE 1, CHLOROPLASTIC/AMYLOPLASTIC"/>
    <property type="match status" value="1"/>
</dbReference>
<dbReference type="Pfam" id="PF13692">
    <property type="entry name" value="Glyco_trans_1_4"/>
    <property type="match status" value="1"/>
</dbReference>
<dbReference type="Pfam" id="PF08323">
    <property type="entry name" value="Glyco_transf_5"/>
    <property type="match status" value="1"/>
</dbReference>
<dbReference type="SUPFAM" id="SSF53756">
    <property type="entry name" value="UDP-Glycosyltransferase/glycogen phosphorylase"/>
    <property type="match status" value="1"/>
</dbReference>
<proteinExistence type="inferred from homology"/>
<name>GLGA_NITV9</name>
<organism>
    <name type="scientific">Nitratidesulfovibrio vulgaris (strain DSM 19637 / Miyazaki F)</name>
    <name type="common">Desulfovibrio vulgaris</name>
    <dbReference type="NCBI Taxonomy" id="883"/>
    <lineage>
        <taxon>Bacteria</taxon>
        <taxon>Pseudomonadati</taxon>
        <taxon>Thermodesulfobacteriota</taxon>
        <taxon>Desulfovibrionia</taxon>
        <taxon>Desulfovibrionales</taxon>
        <taxon>Desulfovibrionaceae</taxon>
        <taxon>Nitratidesulfovibrio</taxon>
    </lineage>
</organism>
<gene>
    <name evidence="1" type="primary">glgA</name>
    <name type="ordered locus">DvMF_0841</name>
</gene>
<comment type="function">
    <text evidence="1">Synthesizes alpha-1,4-glucan chains using ADP-glucose.</text>
</comment>
<comment type="catalytic activity">
    <reaction evidence="1">
        <text>[(1-&gt;4)-alpha-D-glucosyl](n) + ADP-alpha-D-glucose = [(1-&gt;4)-alpha-D-glucosyl](n+1) + ADP + H(+)</text>
        <dbReference type="Rhea" id="RHEA:18189"/>
        <dbReference type="Rhea" id="RHEA-COMP:9584"/>
        <dbReference type="Rhea" id="RHEA-COMP:9587"/>
        <dbReference type="ChEBI" id="CHEBI:15378"/>
        <dbReference type="ChEBI" id="CHEBI:15444"/>
        <dbReference type="ChEBI" id="CHEBI:57498"/>
        <dbReference type="ChEBI" id="CHEBI:456216"/>
        <dbReference type="EC" id="2.4.1.21"/>
    </reaction>
</comment>
<comment type="pathway">
    <text evidence="1">Glycan biosynthesis; glycogen biosynthesis.</text>
</comment>
<comment type="similarity">
    <text evidence="1">Belongs to the glycosyltransferase 1 family. Bacterial/plant glycogen synthase subfamily.</text>
</comment>